<reference key="1">
    <citation type="journal article" date="1997" name="Nature">
        <title>The complete genome sequence of the hyperthermophilic, sulphate-reducing archaeon Archaeoglobus fulgidus.</title>
        <authorList>
            <person name="Klenk H.-P."/>
            <person name="Clayton R.A."/>
            <person name="Tomb J.-F."/>
            <person name="White O."/>
            <person name="Nelson K.E."/>
            <person name="Ketchum K.A."/>
            <person name="Dodson R.J."/>
            <person name="Gwinn M.L."/>
            <person name="Hickey E.K."/>
            <person name="Peterson J.D."/>
            <person name="Richardson D.L."/>
            <person name="Kerlavage A.R."/>
            <person name="Graham D.E."/>
            <person name="Kyrpides N.C."/>
            <person name="Fleischmann R.D."/>
            <person name="Quackenbush J."/>
            <person name="Lee N.H."/>
            <person name="Sutton G.G."/>
            <person name="Gill S.R."/>
            <person name="Kirkness E.F."/>
            <person name="Dougherty B.A."/>
            <person name="McKenney K."/>
            <person name="Adams M.D."/>
            <person name="Loftus B.J."/>
            <person name="Peterson S.N."/>
            <person name="Reich C.I."/>
            <person name="McNeil L.K."/>
            <person name="Badger J.H."/>
            <person name="Glodek A."/>
            <person name="Zhou L."/>
            <person name="Overbeek R."/>
            <person name="Gocayne J.D."/>
            <person name="Weidman J.F."/>
            <person name="McDonald L.A."/>
            <person name="Utterback T.R."/>
            <person name="Cotton M.D."/>
            <person name="Spriggs T."/>
            <person name="Artiach P."/>
            <person name="Kaine B.P."/>
            <person name="Sykes S.M."/>
            <person name="Sadow P.W."/>
            <person name="D'Andrea K.P."/>
            <person name="Bowman C."/>
            <person name="Fujii C."/>
            <person name="Garland S.A."/>
            <person name="Mason T.M."/>
            <person name="Olsen G.J."/>
            <person name="Fraser C.M."/>
            <person name="Smith H.O."/>
            <person name="Woese C.R."/>
            <person name="Venter J.C."/>
        </authorList>
    </citation>
    <scope>NUCLEOTIDE SEQUENCE [LARGE SCALE GENOMIC DNA]</scope>
    <source>
        <strain>ATCC 49558 / DSM 4304 / JCM 9628 / NBRC 100126 / VC-16</strain>
    </source>
</reference>
<organism>
    <name type="scientific">Archaeoglobus fulgidus (strain ATCC 49558 / DSM 4304 / JCM 9628 / NBRC 100126 / VC-16)</name>
    <dbReference type="NCBI Taxonomy" id="224325"/>
    <lineage>
        <taxon>Archaea</taxon>
        <taxon>Methanobacteriati</taxon>
        <taxon>Methanobacteriota</taxon>
        <taxon>Archaeoglobi</taxon>
        <taxon>Archaeoglobales</taxon>
        <taxon>Archaeoglobaceae</taxon>
        <taxon>Archaeoglobus</taxon>
    </lineage>
</organism>
<accession>O29903</accession>
<feature type="chain" id="PRO_0000140870" description="Putative superoxide reductase">
    <location>
        <begin position="1"/>
        <end position="125"/>
    </location>
</feature>
<feature type="binding site" evidence="1">
    <location>
        <position position="12"/>
    </location>
    <ligand>
        <name>Fe cation</name>
        <dbReference type="ChEBI" id="CHEBI:24875"/>
    </ligand>
</feature>
<feature type="binding site" evidence="1">
    <location>
        <position position="14"/>
    </location>
    <ligand>
        <name>Fe cation</name>
        <dbReference type="ChEBI" id="CHEBI:24875"/>
    </ligand>
</feature>
<feature type="binding site" evidence="1">
    <location>
        <position position="40"/>
    </location>
    <ligand>
        <name>Fe cation</name>
        <dbReference type="ChEBI" id="CHEBI:24875"/>
    </ligand>
</feature>
<feature type="binding site" evidence="1">
    <location>
        <position position="46"/>
    </location>
    <ligand>
        <name>Fe cation</name>
        <dbReference type="ChEBI" id="CHEBI:24875"/>
    </ligand>
</feature>
<feature type="binding site" evidence="1">
    <location>
        <position position="110"/>
    </location>
    <ligand>
        <name>Fe cation</name>
        <dbReference type="ChEBI" id="CHEBI:24875"/>
    </ligand>
</feature>
<feature type="binding site" evidence="1">
    <location>
        <position position="113"/>
    </location>
    <ligand>
        <name>Fe cation</name>
        <dbReference type="ChEBI" id="CHEBI:24875"/>
    </ligand>
</feature>
<feature type="strand" evidence="6">
    <location>
        <begin position="10"/>
        <end position="12"/>
    </location>
</feature>
<feature type="strand" evidence="6">
    <location>
        <begin position="17"/>
        <end position="24"/>
    </location>
</feature>
<feature type="strand" evidence="6">
    <location>
        <begin position="27"/>
        <end position="34"/>
    </location>
</feature>
<feature type="strand" evidence="6">
    <location>
        <begin position="36"/>
        <end position="38"/>
    </location>
</feature>
<feature type="strand" evidence="4">
    <location>
        <begin position="43"/>
        <end position="46"/>
    </location>
</feature>
<feature type="strand" evidence="6">
    <location>
        <begin position="48"/>
        <end position="57"/>
    </location>
</feature>
<feature type="strand" evidence="6">
    <location>
        <begin position="64"/>
        <end position="71"/>
    </location>
</feature>
<feature type="strand" evidence="5">
    <location>
        <begin position="86"/>
        <end position="88"/>
    </location>
</feature>
<feature type="strand" evidence="6">
    <location>
        <begin position="90"/>
        <end position="97"/>
    </location>
</feature>
<feature type="strand" evidence="6">
    <location>
        <begin position="102"/>
        <end position="110"/>
    </location>
</feature>
<feature type="turn" evidence="6">
    <location>
        <begin position="111"/>
        <end position="113"/>
    </location>
</feature>
<feature type="strand" evidence="6">
    <location>
        <begin position="114"/>
        <end position="122"/>
    </location>
</feature>
<comment type="function">
    <text evidence="1">Uses electrons from reduced NADP, by way of rubredoxin and an oxidoreductase, to catalyze the reduction of superoxide to hydrogen peroxide.</text>
</comment>
<comment type="catalytic activity">
    <reaction evidence="2">
        <text>reduced [rubredoxin] + superoxide + 2 H(+) = oxidized [rubredoxin] + H2O2</text>
        <dbReference type="Rhea" id="RHEA:21324"/>
        <dbReference type="Rhea" id="RHEA-COMP:10302"/>
        <dbReference type="Rhea" id="RHEA-COMP:10303"/>
        <dbReference type="ChEBI" id="CHEBI:15378"/>
        <dbReference type="ChEBI" id="CHEBI:16240"/>
        <dbReference type="ChEBI" id="CHEBI:18421"/>
        <dbReference type="ChEBI" id="CHEBI:29033"/>
        <dbReference type="ChEBI" id="CHEBI:29034"/>
        <dbReference type="EC" id="1.15.1.2"/>
    </reaction>
</comment>
<comment type="cofactor">
    <cofactor evidence="1">
        <name>Fe cation</name>
        <dbReference type="ChEBI" id="CHEBI:24875"/>
    </cofactor>
</comment>
<comment type="similarity">
    <text evidence="3">Belongs to the desulfoferrodoxin family.</text>
</comment>
<proteinExistence type="evidence at protein level"/>
<dbReference type="EC" id="1.15.1.2"/>
<dbReference type="EMBL" id="AE000782">
    <property type="protein sequence ID" value="AAB90892.1"/>
    <property type="molecule type" value="Genomic_DNA"/>
</dbReference>
<dbReference type="PIR" id="H69292">
    <property type="entry name" value="H69292"/>
</dbReference>
<dbReference type="RefSeq" id="WP_010877851.1">
    <property type="nucleotide sequence ID" value="NC_000917.1"/>
</dbReference>
<dbReference type="PDB" id="4BFF">
    <property type="method" value="X-ray"/>
    <property type="resolution" value="2.00 A"/>
    <property type="chains" value="A/B/C/D/E/F/G/H/I/J/K/L/M/N/O/P=1-125"/>
</dbReference>
<dbReference type="PDB" id="4BFJ">
    <property type="method" value="X-ray"/>
    <property type="resolution" value="2.80 A"/>
    <property type="chains" value="A/B=1-125"/>
</dbReference>
<dbReference type="PDB" id="4BFK">
    <property type="method" value="X-ray"/>
    <property type="resolution" value="2.10 A"/>
    <property type="chains" value="A/B/C/D=1-125"/>
</dbReference>
<dbReference type="PDB" id="4BGL">
    <property type="method" value="X-ray"/>
    <property type="resolution" value="1.90 A"/>
    <property type="chains" value="A/B/C/D=1-125"/>
</dbReference>
<dbReference type="PDB" id="4C4B">
    <property type="method" value="X-ray"/>
    <property type="resolution" value="2.50 A"/>
    <property type="chains" value="A/B=1-125"/>
</dbReference>
<dbReference type="PDB" id="4C4U">
    <property type="method" value="X-ray"/>
    <property type="resolution" value="2.58 A"/>
    <property type="chains" value="A/B/C/D/E/F/G/H/I/J/K/L/M/N/O/P=1-125"/>
</dbReference>
<dbReference type="PDBsum" id="4BFF"/>
<dbReference type="PDBsum" id="4BFJ"/>
<dbReference type="PDBsum" id="4BFK"/>
<dbReference type="PDBsum" id="4BGL"/>
<dbReference type="PDBsum" id="4C4B"/>
<dbReference type="PDBsum" id="4C4U"/>
<dbReference type="SMR" id="O29903"/>
<dbReference type="STRING" id="224325.AF_0344"/>
<dbReference type="PaxDb" id="224325-AF_0344"/>
<dbReference type="EnsemblBacteria" id="AAB90892">
    <property type="protein sequence ID" value="AAB90892"/>
    <property type="gene ID" value="AF_0344"/>
</dbReference>
<dbReference type="KEGG" id="afu:AF_0344"/>
<dbReference type="eggNOG" id="arCOG02146">
    <property type="taxonomic scope" value="Archaea"/>
</dbReference>
<dbReference type="HOGENOM" id="CLU_118960_2_1_2"/>
<dbReference type="OrthoDB" id="30725at2157"/>
<dbReference type="PhylomeDB" id="O29903"/>
<dbReference type="BRENDA" id="1.15.1.1">
    <property type="organism ID" value="414"/>
</dbReference>
<dbReference type="BRENDA" id="1.15.1.2">
    <property type="organism ID" value="414"/>
</dbReference>
<dbReference type="EvolutionaryTrace" id="O29903"/>
<dbReference type="Proteomes" id="UP000002199">
    <property type="component" value="Chromosome"/>
</dbReference>
<dbReference type="GO" id="GO:0005506">
    <property type="term" value="F:iron ion binding"/>
    <property type="evidence" value="ECO:0007669"/>
    <property type="project" value="InterPro"/>
</dbReference>
<dbReference type="GO" id="GO:0050605">
    <property type="term" value="F:superoxide reductase activity"/>
    <property type="evidence" value="ECO:0007669"/>
    <property type="project" value="UniProtKB-EC"/>
</dbReference>
<dbReference type="CDD" id="cd03172">
    <property type="entry name" value="SORL_classII"/>
    <property type="match status" value="1"/>
</dbReference>
<dbReference type="Gene3D" id="2.60.40.730">
    <property type="entry name" value="SOR catalytic domain"/>
    <property type="match status" value="1"/>
</dbReference>
<dbReference type="InterPro" id="IPR002742">
    <property type="entry name" value="Desulfoferrodoxin_Fe-bd_dom"/>
</dbReference>
<dbReference type="InterPro" id="IPR036073">
    <property type="entry name" value="Desulfoferrodoxin_Fe-bd_dom_sf"/>
</dbReference>
<dbReference type="InterPro" id="IPR051233">
    <property type="entry name" value="Desulfoferrodoxin_SOR"/>
</dbReference>
<dbReference type="NCBIfam" id="TIGR00332">
    <property type="entry name" value="neela_ferrous"/>
    <property type="match status" value="1"/>
</dbReference>
<dbReference type="PANTHER" id="PTHR36541">
    <property type="entry name" value="SUPEROXIDE REDUCTASE-RELATED"/>
    <property type="match status" value="1"/>
</dbReference>
<dbReference type="PANTHER" id="PTHR36541:SF1">
    <property type="entry name" value="SUPEROXIDE REDUCTASE-RELATED"/>
    <property type="match status" value="1"/>
</dbReference>
<dbReference type="Pfam" id="PF01880">
    <property type="entry name" value="Desulfoferrodox"/>
    <property type="match status" value="1"/>
</dbReference>
<dbReference type="SUPFAM" id="SSF49367">
    <property type="entry name" value="Superoxide reductase-like"/>
    <property type="match status" value="1"/>
</dbReference>
<gene>
    <name type="ordered locus">AF_0344</name>
</gene>
<sequence>MELFQTADWKKEKHVPVIEVLRAEGGVVEVKVSVGKEIPHPNTTEHHIAWIELVFQPEGSKFPYVVGRAEFAAHGASVDGPNTSGVYTDPVAVFAFKAEKSGKLTAFSYCNIHGLWMGEATLSLE</sequence>
<keyword id="KW-0002">3D-structure</keyword>
<keyword id="KW-0249">Electron transport</keyword>
<keyword id="KW-0408">Iron</keyword>
<keyword id="KW-0479">Metal-binding</keyword>
<keyword id="KW-0560">Oxidoreductase</keyword>
<keyword id="KW-1185">Reference proteome</keyword>
<keyword id="KW-0813">Transport</keyword>
<evidence type="ECO:0000250" key="1"/>
<evidence type="ECO:0000250" key="2">
    <source>
        <dbReference type="UniProtKB" id="P82385"/>
    </source>
</evidence>
<evidence type="ECO:0000305" key="3"/>
<evidence type="ECO:0007829" key="4">
    <source>
        <dbReference type="PDB" id="4BFF"/>
    </source>
</evidence>
<evidence type="ECO:0007829" key="5">
    <source>
        <dbReference type="PDB" id="4BFJ"/>
    </source>
</evidence>
<evidence type="ECO:0007829" key="6">
    <source>
        <dbReference type="PDB" id="4BGL"/>
    </source>
</evidence>
<name>SOR_ARCFU</name>
<protein>
    <recommendedName>
        <fullName>Putative superoxide reductase</fullName>
        <shortName>SOR</shortName>
        <ecNumber>1.15.1.2</ecNumber>
    </recommendedName>
</protein>